<evidence type="ECO:0000255" key="1">
    <source>
        <dbReference type="HAMAP-Rule" id="MF_01187"/>
    </source>
</evidence>
<organism>
    <name type="scientific">Legionella pneumophila (strain Paris)</name>
    <dbReference type="NCBI Taxonomy" id="297246"/>
    <lineage>
        <taxon>Bacteria</taxon>
        <taxon>Pseudomonadati</taxon>
        <taxon>Pseudomonadota</taxon>
        <taxon>Gammaproteobacteria</taxon>
        <taxon>Legionellales</taxon>
        <taxon>Legionellaceae</taxon>
        <taxon>Legionella</taxon>
    </lineage>
</organism>
<dbReference type="EMBL" id="CR628336">
    <property type="protein sequence ID" value="CAH13047.1"/>
    <property type="molecule type" value="Genomic_DNA"/>
</dbReference>
<dbReference type="RefSeq" id="WP_010947637.1">
    <property type="nucleotide sequence ID" value="NC_006368.1"/>
</dbReference>
<dbReference type="SMR" id="Q5X3Y6"/>
<dbReference type="KEGG" id="lpp:lpp1895"/>
<dbReference type="LegioList" id="lpp1895"/>
<dbReference type="HOGENOM" id="CLU_155659_3_1_6"/>
<dbReference type="GO" id="GO:0005829">
    <property type="term" value="C:cytosol"/>
    <property type="evidence" value="ECO:0007669"/>
    <property type="project" value="TreeGrafter"/>
</dbReference>
<dbReference type="FunFam" id="2.20.25.10:FF:000002">
    <property type="entry name" value="UPF0434 protein YcaR"/>
    <property type="match status" value="1"/>
</dbReference>
<dbReference type="Gene3D" id="2.20.25.10">
    <property type="match status" value="1"/>
</dbReference>
<dbReference type="HAMAP" id="MF_01187">
    <property type="entry name" value="UPF0434"/>
    <property type="match status" value="1"/>
</dbReference>
<dbReference type="InterPro" id="IPR005651">
    <property type="entry name" value="Trm112-like"/>
</dbReference>
<dbReference type="PANTHER" id="PTHR33505:SF4">
    <property type="entry name" value="PROTEIN PREY, MITOCHONDRIAL"/>
    <property type="match status" value="1"/>
</dbReference>
<dbReference type="PANTHER" id="PTHR33505">
    <property type="entry name" value="ZGC:162634"/>
    <property type="match status" value="1"/>
</dbReference>
<dbReference type="Pfam" id="PF03966">
    <property type="entry name" value="Trm112p"/>
    <property type="match status" value="1"/>
</dbReference>
<dbReference type="SUPFAM" id="SSF158997">
    <property type="entry name" value="Trm112p-like"/>
    <property type="match status" value="1"/>
</dbReference>
<comment type="similarity">
    <text evidence="1">Belongs to the UPF0434 family.</text>
</comment>
<gene>
    <name type="ordered locus">lpp1895</name>
</gene>
<sequence>MDKKLLEILVCPLCKGKLLFKKQELICKFDRLAFPVRDDIPVMLEQEARLIPLEEKDKL</sequence>
<reference key="1">
    <citation type="journal article" date="2004" name="Nat. Genet.">
        <title>Evidence in the Legionella pneumophila genome for exploitation of host cell functions and high genome plasticity.</title>
        <authorList>
            <person name="Cazalet C."/>
            <person name="Rusniok C."/>
            <person name="Brueggemann H."/>
            <person name="Zidane N."/>
            <person name="Magnier A."/>
            <person name="Ma L."/>
            <person name="Tichit M."/>
            <person name="Jarraud S."/>
            <person name="Bouchier C."/>
            <person name="Vandenesch F."/>
            <person name="Kunst F."/>
            <person name="Etienne J."/>
            <person name="Glaser P."/>
            <person name="Buchrieser C."/>
        </authorList>
    </citation>
    <scope>NUCLEOTIDE SEQUENCE [LARGE SCALE GENOMIC DNA]</scope>
    <source>
        <strain>Paris</strain>
    </source>
</reference>
<feature type="chain" id="PRO_0000291105" description="UPF0434 protein lpp1895">
    <location>
        <begin position="1"/>
        <end position="59"/>
    </location>
</feature>
<name>Y1895_LEGPA</name>
<accession>Q5X3Y6</accession>
<protein>
    <recommendedName>
        <fullName evidence="1">UPF0434 protein lpp1895</fullName>
    </recommendedName>
</protein>
<proteinExistence type="inferred from homology"/>